<protein>
    <recommendedName>
        <fullName evidence="1">Small ribosomal subunit protein uS19</fullName>
    </recommendedName>
    <alternativeName>
        <fullName evidence="2">30S ribosomal protein S19</fullName>
    </alternativeName>
</protein>
<organism>
    <name type="scientific">Elusimicrobium minutum (strain Pei191)</name>
    <dbReference type="NCBI Taxonomy" id="445932"/>
    <lineage>
        <taxon>Bacteria</taxon>
        <taxon>Pseudomonadati</taxon>
        <taxon>Elusimicrobiota</taxon>
        <taxon>Elusimicrobia</taxon>
        <taxon>Elusimicrobiales</taxon>
        <taxon>Elusimicrobiaceae</taxon>
        <taxon>Elusimicrobium</taxon>
    </lineage>
</organism>
<evidence type="ECO:0000255" key="1">
    <source>
        <dbReference type="HAMAP-Rule" id="MF_00531"/>
    </source>
</evidence>
<evidence type="ECO:0000305" key="2"/>
<reference key="1">
    <citation type="journal article" date="2009" name="Appl. Environ. Microbiol.">
        <title>Genomic analysis of 'Elusimicrobium minutum,' the first cultivated representative of the phylum 'Elusimicrobia' (formerly termite group 1).</title>
        <authorList>
            <person name="Herlemann D.P.R."/>
            <person name="Geissinger O."/>
            <person name="Ikeda-Ohtsubo W."/>
            <person name="Kunin V."/>
            <person name="Sun H."/>
            <person name="Lapidus A."/>
            <person name="Hugenholtz P."/>
            <person name="Brune A."/>
        </authorList>
    </citation>
    <scope>NUCLEOTIDE SEQUENCE [LARGE SCALE GENOMIC DNA]</scope>
    <source>
        <strain>Pei191</strain>
    </source>
</reference>
<comment type="function">
    <text evidence="1">Protein S19 forms a complex with S13 that binds strongly to the 16S ribosomal RNA.</text>
</comment>
<comment type="similarity">
    <text evidence="1">Belongs to the universal ribosomal protein uS19 family.</text>
</comment>
<proteinExistence type="inferred from homology"/>
<name>RS19_ELUMP</name>
<dbReference type="EMBL" id="CP001055">
    <property type="protein sequence ID" value="ACC98963.1"/>
    <property type="molecule type" value="Genomic_DNA"/>
</dbReference>
<dbReference type="RefSeq" id="WP_012415578.1">
    <property type="nucleotide sequence ID" value="NC_010644.1"/>
</dbReference>
<dbReference type="SMR" id="B2KEL7"/>
<dbReference type="STRING" id="445932.Emin_1414"/>
<dbReference type="KEGG" id="emi:Emin_1414"/>
<dbReference type="HOGENOM" id="CLU_144911_0_1_0"/>
<dbReference type="OrthoDB" id="9797833at2"/>
<dbReference type="Proteomes" id="UP000001029">
    <property type="component" value="Chromosome"/>
</dbReference>
<dbReference type="GO" id="GO:0005737">
    <property type="term" value="C:cytoplasm"/>
    <property type="evidence" value="ECO:0007669"/>
    <property type="project" value="UniProtKB-ARBA"/>
</dbReference>
<dbReference type="GO" id="GO:0015935">
    <property type="term" value="C:small ribosomal subunit"/>
    <property type="evidence" value="ECO:0007669"/>
    <property type="project" value="InterPro"/>
</dbReference>
<dbReference type="GO" id="GO:0019843">
    <property type="term" value="F:rRNA binding"/>
    <property type="evidence" value="ECO:0007669"/>
    <property type="project" value="UniProtKB-UniRule"/>
</dbReference>
<dbReference type="GO" id="GO:0003735">
    <property type="term" value="F:structural constituent of ribosome"/>
    <property type="evidence" value="ECO:0007669"/>
    <property type="project" value="InterPro"/>
</dbReference>
<dbReference type="GO" id="GO:0000028">
    <property type="term" value="P:ribosomal small subunit assembly"/>
    <property type="evidence" value="ECO:0007669"/>
    <property type="project" value="TreeGrafter"/>
</dbReference>
<dbReference type="GO" id="GO:0006412">
    <property type="term" value="P:translation"/>
    <property type="evidence" value="ECO:0007669"/>
    <property type="project" value="UniProtKB-UniRule"/>
</dbReference>
<dbReference type="FunFam" id="3.30.860.10:FF:000001">
    <property type="entry name" value="30S ribosomal protein S19"/>
    <property type="match status" value="1"/>
</dbReference>
<dbReference type="Gene3D" id="3.30.860.10">
    <property type="entry name" value="30s Ribosomal Protein S19, Chain A"/>
    <property type="match status" value="1"/>
</dbReference>
<dbReference type="HAMAP" id="MF_00531">
    <property type="entry name" value="Ribosomal_uS19"/>
    <property type="match status" value="1"/>
</dbReference>
<dbReference type="InterPro" id="IPR002222">
    <property type="entry name" value="Ribosomal_uS19"/>
</dbReference>
<dbReference type="InterPro" id="IPR005732">
    <property type="entry name" value="Ribosomal_uS19_bac-type"/>
</dbReference>
<dbReference type="InterPro" id="IPR020934">
    <property type="entry name" value="Ribosomal_uS19_CS"/>
</dbReference>
<dbReference type="InterPro" id="IPR023575">
    <property type="entry name" value="Ribosomal_uS19_SF"/>
</dbReference>
<dbReference type="NCBIfam" id="TIGR01050">
    <property type="entry name" value="rpsS_bact"/>
    <property type="match status" value="1"/>
</dbReference>
<dbReference type="PANTHER" id="PTHR11880">
    <property type="entry name" value="RIBOSOMAL PROTEIN S19P FAMILY MEMBER"/>
    <property type="match status" value="1"/>
</dbReference>
<dbReference type="PANTHER" id="PTHR11880:SF8">
    <property type="entry name" value="SMALL RIBOSOMAL SUBUNIT PROTEIN US19M"/>
    <property type="match status" value="1"/>
</dbReference>
<dbReference type="Pfam" id="PF00203">
    <property type="entry name" value="Ribosomal_S19"/>
    <property type="match status" value="1"/>
</dbReference>
<dbReference type="PIRSF" id="PIRSF002144">
    <property type="entry name" value="Ribosomal_S19"/>
    <property type="match status" value="1"/>
</dbReference>
<dbReference type="PRINTS" id="PR00975">
    <property type="entry name" value="RIBOSOMALS19"/>
</dbReference>
<dbReference type="SUPFAM" id="SSF54570">
    <property type="entry name" value="Ribosomal protein S19"/>
    <property type="match status" value="1"/>
</dbReference>
<dbReference type="PROSITE" id="PS00323">
    <property type="entry name" value="RIBOSOMAL_S19"/>
    <property type="match status" value="1"/>
</dbReference>
<sequence length="94" mass="10702">MGRSTKKGPFIDNNLLEKVQKMNTSSEKKPIKTWARACTIVPEFIGHTFMVHNGKKFLPVYITERMVGHKLGEFSFTRVFKTHGGMTKESTALK</sequence>
<keyword id="KW-1185">Reference proteome</keyword>
<keyword id="KW-0687">Ribonucleoprotein</keyword>
<keyword id="KW-0689">Ribosomal protein</keyword>
<keyword id="KW-0694">RNA-binding</keyword>
<keyword id="KW-0699">rRNA-binding</keyword>
<accession>B2KEL7</accession>
<feature type="chain" id="PRO_1000127976" description="Small ribosomal subunit protein uS19">
    <location>
        <begin position="1"/>
        <end position="94"/>
    </location>
</feature>
<gene>
    <name evidence="1" type="primary">rpsS</name>
    <name type="ordered locus">Emin_1414</name>
</gene>